<protein>
    <recommendedName>
        <fullName>Pre-mRNA-splicing factor CWC25</fullName>
    </recommendedName>
</protein>
<organism>
    <name type="scientific">Candida albicans (strain SC5314 / ATCC MYA-2876)</name>
    <name type="common">Yeast</name>
    <dbReference type="NCBI Taxonomy" id="237561"/>
    <lineage>
        <taxon>Eukaryota</taxon>
        <taxon>Fungi</taxon>
        <taxon>Dikarya</taxon>
        <taxon>Ascomycota</taxon>
        <taxon>Saccharomycotina</taxon>
        <taxon>Pichiomycetes</taxon>
        <taxon>Debaryomycetaceae</taxon>
        <taxon>Candida/Lodderomyces clade</taxon>
        <taxon>Candida</taxon>
    </lineage>
</organism>
<evidence type="ECO:0000250" key="1"/>
<evidence type="ECO:0000255" key="2"/>
<evidence type="ECO:0000256" key="3">
    <source>
        <dbReference type="SAM" id="MobiDB-lite"/>
    </source>
</evidence>
<evidence type="ECO:0000305" key="4"/>
<accession>Q59LQ5</accession>
<accession>A0A1D8PNV8</accession>
<sequence length="221" mass="25793">MAGDLNLKKSWNPALVKNQQKVWEEEQQKLDELKRIKERNQEYKQEQEYLELLKLQHGDQFQIKDLNKQQKLKISKLNWMYDDVPFEGNEKVEENSSGFIESNVEFTDGKSKVENLLKGNHVVGKKRDGSGTSDRINKIIGVGMTKSSKVSYSDDPLLKIKQQQQQAQRVARKQHPSDKHSHRSRHSSKSSSDRVHKSHEHERSRKHNSSHTRHKDGSPHR</sequence>
<name>CWC25_CANAL</name>
<proteinExistence type="inferred from homology"/>
<dbReference type="EMBL" id="CP017627">
    <property type="protein sequence ID" value="AOW29817.1"/>
    <property type="molecule type" value="Genomic_DNA"/>
</dbReference>
<dbReference type="RefSeq" id="XP_710662.2">
    <property type="nucleotide sequence ID" value="XM_705570.2"/>
</dbReference>
<dbReference type="SMR" id="Q59LQ5"/>
<dbReference type="FunCoup" id="Q59LQ5">
    <property type="interactions" value="63"/>
</dbReference>
<dbReference type="STRING" id="237561.Q59LQ5"/>
<dbReference type="EnsemblFungi" id="C5_04080C_A-T">
    <property type="protein sequence ID" value="C5_04080C_A-T-p1"/>
    <property type="gene ID" value="C5_04080C_A"/>
</dbReference>
<dbReference type="GeneID" id="3647731"/>
<dbReference type="KEGG" id="cal:CAALFM_C504080CA"/>
<dbReference type="CGD" id="CAL0000183063">
    <property type="gene designation" value="CWC25"/>
</dbReference>
<dbReference type="VEuPathDB" id="FungiDB:C5_04080C_A"/>
<dbReference type="eggNOG" id="KOG3869">
    <property type="taxonomic scope" value="Eukaryota"/>
</dbReference>
<dbReference type="HOGENOM" id="CLU_025093_3_0_1"/>
<dbReference type="InParanoid" id="Q59LQ5"/>
<dbReference type="OrthoDB" id="21123at2759"/>
<dbReference type="PRO" id="PR:Q59LQ5"/>
<dbReference type="Proteomes" id="UP000000559">
    <property type="component" value="Chromosome 5"/>
</dbReference>
<dbReference type="GO" id="GO:0005681">
    <property type="term" value="C:spliceosomal complex"/>
    <property type="evidence" value="ECO:0007669"/>
    <property type="project" value="UniProtKB-KW"/>
</dbReference>
<dbReference type="GO" id="GO:0044180">
    <property type="term" value="P:filamentous growth of a unicellular organism"/>
    <property type="evidence" value="ECO:0000315"/>
    <property type="project" value="CGD"/>
</dbReference>
<dbReference type="GO" id="GO:0006397">
    <property type="term" value="P:mRNA processing"/>
    <property type="evidence" value="ECO:0007669"/>
    <property type="project" value="UniProtKB-KW"/>
</dbReference>
<dbReference type="GO" id="GO:0008380">
    <property type="term" value="P:RNA splicing"/>
    <property type="evidence" value="ECO:0007669"/>
    <property type="project" value="UniProtKB-KW"/>
</dbReference>
<dbReference type="InterPro" id="IPR019339">
    <property type="entry name" value="CIR_N_dom"/>
</dbReference>
<dbReference type="InterPro" id="IPR022209">
    <property type="entry name" value="CWC25"/>
</dbReference>
<dbReference type="Pfam" id="PF10197">
    <property type="entry name" value="Cir_N"/>
    <property type="match status" value="1"/>
</dbReference>
<dbReference type="Pfam" id="PF12542">
    <property type="entry name" value="CWC25"/>
    <property type="match status" value="1"/>
</dbReference>
<dbReference type="SMART" id="SM01083">
    <property type="entry name" value="Cir_N"/>
    <property type="match status" value="1"/>
</dbReference>
<gene>
    <name type="primary">CWC25</name>
    <name type="ordered locus">CAALFM_C504080CA</name>
    <name type="ORF">CaO19.1281</name>
    <name type="ORF">CaO19.8868</name>
</gene>
<feature type="chain" id="PRO_0000079585" description="Pre-mRNA-splicing factor CWC25">
    <location>
        <begin position="1"/>
        <end position="221"/>
    </location>
</feature>
<feature type="region of interest" description="Disordered" evidence="3">
    <location>
        <begin position="145"/>
        <end position="221"/>
    </location>
</feature>
<feature type="coiled-coil region" evidence="2">
    <location>
        <begin position="14"/>
        <end position="56"/>
    </location>
</feature>
<feature type="compositionally biased region" description="Basic residues" evidence="3">
    <location>
        <begin position="170"/>
        <end position="188"/>
    </location>
</feature>
<feature type="compositionally biased region" description="Basic and acidic residues" evidence="3">
    <location>
        <begin position="191"/>
        <end position="203"/>
    </location>
</feature>
<feature type="compositionally biased region" description="Basic residues" evidence="3">
    <location>
        <begin position="204"/>
        <end position="214"/>
    </location>
</feature>
<reference key="1">
    <citation type="journal article" date="2004" name="Proc. Natl. Acad. Sci. U.S.A.">
        <title>The diploid genome sequence of Candida albicans.</title>
        <authorList>
            <person name="Jones T."/>
            <person name="Federspiel N.A."/>
            <person name="Chibana H."/>
            <person name="Dungan J."/>
            <person name="Kalman S."/>
            <person name="Magee B.B."/>
            <person name="Newport G."/>
            <person name="Thorstenson Y.R."/>
            <person name="Agabian N."/>
            <person name="Magee P.T."/>
            <person name="Davis R.W."/>
            <person name="Scherer S."/>
        </authorList>
    </citation>
    <scope>NUCLEOTIDE SEQUENCE [LARGE SCALE GENOMIC DNA]</scope>
    <source>
        <strain>SC5314 / ATCC MYA-2876</strain>
    </source>
</reference>
<reference key="2">
    <citation type="journal article" date="2007" name="Genome Biol.">
        <title>Assembly of the Candida albicans genome into sixteen supercontigs aligned on the eight chromosomes.</title>
        <authorList>
            <person name="van het Hoog M."/>
            <person name="Rast T.J."/>
            <person name="Martchenko M."/>
            <person name="Grindle S."/>
            <person name="Dignard D."/>
            <person name="Hogues H."/>
            <person name="Cuomo C."/>
            <person name="Berriman M."/>
            <person name="Scherer S."/>
            <person name="Magee B.B."/>
            <person name="Whiteway M."/>
            <person name="Chibana H."/>
            <person name="Nantel A."/>
            <person name="Magee P.T."/>
        </authorList>
    </citation>
    <scope>GENOME REANNOTATION</scope>
    <source>
        <strain>SC5314 / ATCC MYA-2876</strain>
    </source>
</reference>
<reference key="3">
    <citation type="journal article" date="2013" name="Genome Biol.">
        <title>Assembly of a phased diploid Candida albicans genome facilitates allele-specific measurements and provides a simple model for repeat and indel structure.</title>
        <authorList>
            <person name="Muzzey D."/>
            <person name="Schwartz K."/>
            <person name="Weissman J.S."/>
            <person name="Sherlock G."/>
        </authorList>
    </citation>
    <scope>NUCLEOTIDE SEQUENCE [LARGE SCALE GENOMIC DNA]</scope>
    <scope>GENOME REANNOTATION</scope>
    <source>
        <strain>SC5314 / ATCC MYA-2876</strain>
    </source>
</reference>
<keyword id="KW-0175">Coiled coil</keyword>
<keyword id="KW-0507">mRNA processing</keyword>
<keyword id="KW-0508">mRNA splicing</keyword>
<keyword id="KW-0539">Nucleus</keyword>
<keyword id="KW-1185">Reference proteome</keyword>
<keyword id="KW-0747">Spliceosome</keyword>
<comment type="function">
    <text evidence="1">Involved in pre-mRNA splicing.</text>
</comment>
<comment type="subunit">
    <text evidence="1">Associated with the spliceosome.</text>
</comment>
<comment type="subcellular location">
    <subcellularLocation>
        <location evidence="1">Nucleus</location>
    </subcellularLocation>
</comment>
<comment type="similarity">
    <text evidence="4">Belongs to the CWC25 family.</text>
</comment>